<proteinExistence type="inferred from homology"/>
<sequence>MTNVLIEDLKWRGLIYQQTDEQGIEDLLNKEQVTLYCGADPTADSLHIGHLLPFLTLRRFQEHGHRPIVLIGGGTGMIGDPSGKSEERVLQTEEQVDKNIEGISKQMHNIFEFGTDHGAVLVNNRDWLGQISLISFLRDYGKHVGVNYMLGKDSIQSRLEHGISYTEFTYTILQAIDFGHLNRELNCKIQVGGSDQWGNITSGIELMRRMYGQTDAYGLTIPLVTKSDGKKFGKSESGAVWLDAEKTSPYEFYQFWINQSDEDVIKFLKYFTFLGKEEIDRLEQSKNEAPHLREAQKTLAEEVTKFIHGEDALNDAIRISQALFSGDLKSLSAKELKDGFKDVPQVTLSNDTTNIVEVLIETGISPSKRQAREDVNNGAIYINGERQQDVNYALAPEDKIDGEFTIIRRGKKKYFMVNYQ</sequence>
<gene>
    <name evidence="1" type="primary">tyrS</name>
    <name type="ordered locus">USA300HOU_1717</name>
</gene>
<feature type="chain" id="PRO_1000088631" description="Tyrosine--tRNA ligase">
    <location>
        <begin position="1"/>
        <end position="420"/>
    </location>
</feature>
<feature type="domain" description="S4 RNA-binding" evidence="1">
    <location>
        <begin position="353"/>
        <end position="420"/>
    </location>
</feature>
<feature type="short sequence motif" description="'HIGH' region">
    <location>
        <begin position="41"/>
        <end position="50"/>
    </location>
</feature>
<feature type="short sequence motif" description="'KMSKS' region">
    <location>
        <begin position="231"/>
        <end position="235"/>
    </location>
</feature>
<feature type="binding site" evidence="1">
    <location>
        <position position="36"/>
    </location>
    <ligand>
        <name>L-tyrosine</name>
        <dbReference type="ChEBI" id="CHEBI:58315"/>
    </ligand>
</feature>
<feature type="binding site" evidence="1">
    <location>
        <position position="170"/>
    </location>
    <ligand>
        <name>L-tyrosine</name>
        <dbReference type="ChEBI" id="CHEBI:58315"/>
    </ligand>
</feature>
<feature type="binding site" evidence="1">
    <location>
        <position position="174"/>
    </location>
    <ligand>
        <name>L-tyrosine</name>
        <dbReference type="ChEBI" id="CHEBI:58315"/>
    </ligand>
</feature>
<feature type="binding site" evidence="1">
    <location>
        <position position="234"/>
    </location>
    <ligand>
        <name>ATP</name>
        <dbReference type="ChEBI" id="CHEBI:30616"/>
    </ligand>
</feature>
<reference key="1">
    <citation type="journal article" date="2007" name="BMC Microbiol.">
        <title>Subtle genetic changes enhance virulence of methicillin resistant and sensitive Staphylococcus aureus.</title>
        <authorList>
            <person name="Highlander S.K."/>
            <person name="Hulten K.G."/>
            <person name="Qin X."/>
            <person name="Jiang H."/>
            <person name="Yerrapragada S."/>
            <person name="Mason E.O. Jr."/>
            <person name="Shang Y."/>
            <person name="Williams T.M."/>
            <person name="Fortunov R.M."/>
            <person name="Liu Y."/>
            <person name="Igboeli O."/>
            <person name="Petrosino J."/>
            <person name="Tirumalai M."/>
            <person name="Uzman A."/>
            <person name="Fox G.E."/>
            <person name="Cardenas A.M."/>
            <person name="Muzny D.M."/>
            <person name="Hemphill L."/>
            <person name="Ding Y."/>
            <person name="Dugan S."/>
            <person name="Blyth P.R."/>
            <person name="Buhay C.J."/>
            <person name="Dinh H.H."/>
            <person name="Hawes A.C."/>
            <person name="Holder M."/>
            <person name="Kovar C.L."/>
            <person name="Lee S.L."/>
            <person name="Liu W."/>
            <person name="Nazareth L.V."/>
            <person name="Wang Q."/>
            <person name="Zhou J."/>
            <person name="Kaplan S.L."/>
            <person name="Weinstock G.M."/>
        </authorList>
    </citation>
    <scope>NUCLEOTIDE SEQUENCE [LARGE SCALE GENOMIC DNA]</scope>
    <source>
        <strain>USA300 / TCH1516</strain>
    </source>
</reference>
<accession>A8Z2P6</accession>
<comment type="function">
    <text evidence="1">Catalyzes the attachment of tyrosine to tRNA(Tyr) in a two-step reaction: tyrosine is first activated by ATP to form Tyr-AMP and then transferred to the acceptor end of tRNA(Tyr).</text>
</comment>
<comment type="catalytic activity">
    <reaction evidence="1">
        <text>tRNA(Tyr) + L-tyrosine + ATP = L-tyrosyl-tRNA(Tyr) + AMP + diphosphate + H(+)</text>
        <dbReference type="Rhea" id="RHEA:10220"/>
        <dbReference type="Rhea" id="RHEA-COMP:9706"/>
        <dbReference type="Rhea" id="RHEA-COMP:9707"/>
        <dbReference type="ChEBI" id="CHEBI:15378"/>
        <dbReference type="ChEBI" id="CHEBI:30616"/>
        <dbReference type="ChEBI" id="CHEBI:33019"/>
        <dbReference type="ChEBI" id="CHEBI:58315"/>
        <dbReference type="ChEBI" id="CHEBI:78442"/>
        <dbReference type="ChEBI" id="CHEBI:78536"/>
        <dbReference type="ChEBI" id="CHEBI:456215"/>
        <dbReference type="EC" id="6.1.1.1"/>
    </reaction>
</comment>
<comment type="subunit">
    <text evidence="1">Homodimer.</text>
</comment>
<comment type="subcellular location">
    <subcellularLocation>
        <location evidence="1">Cytoplasm</location>
    </subcellularLocation>
</comment>
<comment type="similarity">
    <text evidence="1">Belongs to the class-I aminoacyl-tRNA synthetase family. TyrS type 1 subfamily.</text>
</comment>
<dbReference type="EC" id="6.1.1.1" evidence="1"/>
<dbReference type="EMBL" id="CP000730">
    <property type="protein sequence ID" value="ABX29724.1"/>
    <property type="molecule type" value="Genomic_DNA"/>
</dbReference>
<dbReference type="RefSeq" id="WP_000186029.1">
    <property type="nucleotide sequence ID" value="NC_010079.1"/>
</dbReference>
<dbReference type="SMR" id="A8Z2P6"/>
<dbReference type="KEGG" id="sax:USA300HOU_1717"/>
<dbReference type="HOGENOM" id="CLU_024003_0_3_9"/>
<dbReference type="GO" id="GO:0005829">
    <property type="term" value="C:cytosol"/>
    <property type="evidence" value="ECO:0007669"/>
    <property type="project" value="TreeGrafter"/>
</dbReference>
<dbReference type="GO" id="GO:0005524">
    <property type="term" value="F:ATP binding"/>
    <property type="evidence" value="ECO:0007669"/>
    <property type="project" value="UniProtKB-UniRule"/>
</dbReference>
<dbReference type="GO" id="GO:0003723">
    <property type="term" value="F:RNA binding"/>
    <property type="evidence" value="ECO:0007669"/>
    <property type="project" value="UniProtKB-KW"/>
</dbReference>
<dbReference type="GO" id="GO:0004831">
    <property type="term" value="F:tyrosine-tRNA ligase activity"/>
    <property type="evidence" value="ECO:0007669"/>
    <property type="project" value="UniProtKB-UniRule"/>
</dbReference>
<dbReference type="GO" id="GO:0006437">
    <property type="term" value="P:tyrosyl-tRNA aminoacylation"/>
    <property type="evidence" value="ECO:0007669"/>
    <property type="project" value="UniProtKB-UniRule"/>
</dbReference>
<dbReference type="CDD" id="cd00165">
    <property type="entry name" value="S4"/>
    <property type="match status" value="1"/>
</dbReference>
<dbReference type="CDD" id="cd00395">
    <property type="entry name" value="Tyr_Trp_RS_core"/>
    <property type="match status" value="1"/>
</dbReference>
<dbReference type="FunFam" id="1.10.240.10:FF:000001">
    <property type="entry name" value="Tyrosine--tRNA ligase"/>
    <property type="match status" value="1"/>
</dbReference>
<dbReference type="FunFam" id="3.10.290.10:FF:000012">
    <property type="entry name" value="Tyrosine--tRNA ligase"/>
    <property type="match status" value="1"/>
</dbReference>
<dbReference type="FunFam" id="3.40.50.620:FF:000008">
    <property type="entry name" value="Tyrosine--tRNA ligase"/>
    <property type="match status" value="1"/>
</dbReference>
<dbReference type="Gene3D" id="3.40.50.620">
    <property type="entry name" value="HUPs"/>
    <property type="match status" value="1"/>
</dbReference>
<dbReference type="Gene3D" id="3.10.290.10">
    <property type="entry name" value="RNA-binding S4 domain"/>
    <property type="match status" value="1"/>
</dbReference>
<dbReference type="Gene3D" id="1.10.240.10">
    <property type="entry name" value="Tyrosyl-Transfer RNA Synthetase"/>
    <property type="match status" value="1"/>
</dbReference>
<dbReference type="HAMAP" id="MF_02006">
    <property type="entry name" value="Tyr_tRNA_synth_type1"/>
    <property type="match status" value="1"/>
</dbReference>
<dbReference type="InterPro" id="IPR001412">
    <property type="entry name" value="aa-tRNA-synth_I_CS"/>
</dbReference>
<dbReference type="InterPro" id="IPR002305">
    <property type="entry name" value="aa-tRNA-synth_Ic"/>
</dbReference>
<dbReference type="InterPro" id="IPR014729">
    <property type="entry name" value="Rossmann-like_a/b/a_fold"/>
</dbReference>
<dbReference type="InterPro" id="IPR002942">
    <property type="entry name" value="S4_RNA-bd"/>
</dbReference>
<dbReference type="InterPro" id="IPR036986">
    <property type="entry name" value="S4_RNA-bd_sf"/>
</dbReference>
<dbReference type="InterPro" id="IPR054608">
    <property type="entry name" value="SYY-like_C"/>
</dbReference>
<dbReference type="InterPro" id="IPR002307">
    <property type="entry name" value="Tyr-tRNA-ligase"/>
</dbReference>
<dbReference type="InterPro" id="IPR024088">
    <property type="entry name" value="Tyr-tRNA-ligase_bac-type"/>
</dbReference>
<dbReference type="InterPro" id="IPR024107">
    <property type="entry name" value="Tyr-tRNA-ligase_bac_1"/>
</dbReference>
<dbReference type="NCBIfam" id="TIGR00234">
    <property type="entry name" value="tyrS"/>
    <property type="match status" value="1"/>
</dbReference>
<dbReference type="PANTHER" id="PTHR11766:SF0">
    <property type="entry name" value="TYROSINE--TRNA LIGASE, MITOCHONDRIAL"/>
    <property type="match status" value="1"/>
</dbReference>
<dbReference type="PANTHER" id="PTHR11766">
    <property type="entry name" value="TYROSYL-TRNA SYNTHETASE"/>
    <property type="match status" value="1"/>
</dbReference>
<dbReference type="Pfam" id="PF22421">
    <property type="entry name" value="SYY_C-terminal"/>
    <property type="match status" value="1"/>
</dbReference>
<dbReference type="Pfam" id="PF00579">
    <property type="entry name" value="tRNA-synt_1b"/>
    <property type="match status" value="1"/>
</dbReference>
<dbReference type="PRINTS" id="PR01040">
    <property type="entry name" value="TRNASYNTHTYR"/>
</dbReference>
<dbReference type="SMART" id="SM00363">
    <property type="entry name" value="S4"/>
    <property type="match status" value="1"/>
</dbReference>
<dbReference type="SUPFAM" id="SSF55174">
    <property type="entry name" value="Alpha-L RNA-binding motif"/>
    <property type="match status" value="1"/>
</dbReference>
<dbReference type="SUPFAM" id="SSF52374">
    <property type="entry name" value="Nucleotidylyl transferase"/>
    <property type="match status" value="1"/>
</dbReference>
<dbReference type="PROSITE" id="PS00178">
    <property type="entry name" value="AA_TRNA_LIGASE_I"/>
    <property type="match status" value="1"/>
</dbReference>
<dbReference type="PROSITE" id="PS50889">
    <property type="entry name" value="S4"/>
    <property type="match status" value="1"/>
</dbReference>
<organism>
    <name type="scientific">Staphylococcus aureus (strain USA300 / TCH1516)</name>
    <dbReference type="NCBI Taxonomy" id="451516"/>
    <lineage>
        <taxon>Bacteria</taxon>
        <taxon>Bacillati</taxon>
        <taxon>Bacillota</taxon>
        <taxon>Bacilli</taxon>
        <taxon>Bacillales</taxon>
        <taxon>Staphylococcaceae</taxon>
        <taxon>Staphylococcus</taxon>
    </lineage>
</organism>
<keyword id="KW-0030">Aminoacyl-tRNA synthetase</keyword>
<keyword id="KW-0067">ATP-binding</keyword>
<keyword id="KW-0963">Cytoplasm</keyword>
<keyword id="KW-0436">Ligase</keyword>
<keyword id="KW-0547">Nucleotide-binding</keyword>
<keyword id="KW-0648">Protein biosynthesis</keyword>
<keyword id="KW-0694">RNA-binding</keyword>
<protein>
    <recommendedName>
        <fullName evidence="1">Tyrosine--tRNA ligase</fullName>
        <ecNumber evidence="1">6.1.1.1</ecNumber>
    </recommendedName>
    <alternativeName>
        <fullName evidence="1">Tyrosyl-tRNA synthetase</fullName>
        <shortName evidence="1">TyrRS</shortName>
    </alternativeName>
</protein>
<name>SYY_STAAT</name>
<evidence type="ECO:0000255" key="1">
    <source>
        <dbReference type="HAMAP-Rule" id="MF_02006"/>
    </source>
</evidence>